<feature type="chain" id="PRO_0000085423" description="Protein Vpu">
    <location>
        <begin position="1"/>
        <end position="82"/>
    </location>
</feature>
<feature type="topological domain" description="Extracellular" evidence="1">
    <location>
        <begin position="1"/>
        <end position="7"/>
    </location>
</feature>
<feature type="transmembrane region" description="Helical" evidence="1">
    <location>
        <begin position="8"/>
        <end position="28"/>
    </location>
</feature>
<feature type="topological domain" description="Cytoplasmic" evidence="1">
    <location>
        <begin position="29"/>
        <end position="82"/>
    </location>
</feature>
<feature type="modified residue" description="Phosphoserine; by host CK2" evidence="1">
    <location>
        <position position="53"/>
    </location>
</feature>
<feature type="modified residue" description="Phosphoserine; by host CK2" evidence="1">
    <location>
        <position position="57"/>
    </location>
</feature>
<organismHost>
    <name type="scientific">Homo sapiens</name>
    <name type="common">Human</name>
    <dbReference type="NCBI Taxonomy" id="9606"/>
</organismHost>
<comment type="function">
    <text evidence="1">Enhances virion budding by targeting host CD4 and Tetherin/BST2 to proteasome degradation. Degradation of CD4 prevents any unwanted premature interactions between viral Env and its host receptor CD4 in the endoplasmic reticulum. Degradation of antiretroviral protein Tetherin/BST2 is important for virion budding, as BST2 tethers new viral particles to the host cell membrane. Mechanistically, Vpu bridges either CD4 or BST2 to BTRC, a substrate recognition subunit of the Skp1/Cullin/F-box protein E3 ubiquitin ligase, induces their ubiquitination and subsequent proteasomal degradation. The alteration of the E3 ligase specificity by Vpu seems to promote the degradation of host IKBKB, leading to NF-kappa-B down-regulation and subsequent apoptosis. Acts as a viroporin that forms an oligomeric ion channel in membranes. Modulates the host DNA repair mechanisms to promote degradation of nuclear viral cDNA in cells that are already productively infected in order to suppress immune sensing and proviral hyper-integration (superinfection). Manipulates PML-NBs and modulates SUMOylation of host BLM protein thereby enhancing its DNA-end processing activity toward viral unintegrated linear DNA. Also inhibits RAD52-mediated homologous repair of viral cDNA, preventing the generation of dead-end circular forms of single copies of the long terminal repeat and permitting sustained nucleolytic attack.</text>
</comment>
<comment type="activity regulation">
    <text evidence="1">Ion channel activity is inhibited by hexamethylene amiloride in vitro.</text>
</comment>
<comment type="subunit">
    <text evidence="1">Homopentamer. Interacts with host CD4 and BRTC; these interactions induce proteasomal degradation of CD4. Interacts with host BST2; this interaction leads to the degradation of host BST2. Interacts with host FBXW11. Interacts with host AP1M1; this interaction plays a role in the mistrafficking and subsequent degradation of host BST2. Interacts with host RANBP2; this interaction allows Vpu to down-regulate host BLM sumoylation.</text>
</comment>
<comment type="subcellular location">
    <subcellularLocation>
        <location evidence="1">Host membrane</location>
        <topology evidence="1">Single-pass type I membrane protein</topology>
    </subcellularLocation>
</comment>
<comment type="domain">
    <text evidence="1">The N-terminus and transmembrane domains are required for self-oligomerization and proper virion budding, whereas the cytoplasmic domain is required for CD4 degradation. The cytoplasmic domain is composed of 2 amphipathic alpha helix that form a U-shape.</text>
</comment>
<comment type="PTM">
    <text evidence="1">Phosphorylated by host CK2. This phosphorylation is necessary for interaction with human BTRC and degradation of CD4.</text>
</comment>
<comment type="miscellaneous">
    <text evidence="1">HIV-1 lineages are divided in three main groups, M (for Major), O (for Outlier), and N (for New, or Non-M, Non-O). The vast majority of strains found worldwide belong to the group M. Group O seems to be endemic to and largely confined to Cameroon and neighboring countries in West Central Africa, where these viruses represent a small minority of HIV-1 strains. The group N is represented by a limited number of isolates from Cameroonian persons. The group M is further subdivided in 9 clades or subtypes (A to D, F to H, J and K).</text>
</comment>
<comment type="similarity">
    <text evidence="1">Belongs to the HIV-1 VPU protein family.</text>
</comment>
<reference key="1">
    <citation type="journal article" date="1989" name="Virology">
        <title>Biological and molecular characterization of human immunodeficiency virus (HIV-1BR) from the brain of a patient with progressive dementia.</title>
        <authorList>
            <person name="Anand R."/>
            <person name="Thayer R."/>
            <person name="Srinivasan A."/>
            <person name="Nayyar S."/>
            <person name="Gardner M."/>
            <person name="Luciw P."/>
            <person name="Dandekar S."/>
        </authorList>
    </citation>
    <scope>NUCLEOTIDE SEQUENCE [GENOMIC RNA]</scope>
</reference>
<accession>P12516</accession>
<dbReference type="EMBL" id="M21098">
    <property type="protein sequence ID" value="AAA44220.1"/>
    <property type="molecule type" value="Genomic_RNA"/>
</dbReference>
<dbReference type="GO" id="GO:0033644">
    <property type="term" value="C:host cell membrane"/>
    <property type="evidence" value="ECO:0007669"/>
    <property type="project" value="UniProtKB-SubCell"/>
</dbReference>
<dbReference type="GO" id="GO:0016020">
    <property type="term" value="C:membrane"/>
    <property type="evidence" value="ECO:0007669"/>
    <property type="project" value="UniProtKB-UniRule"/>
</dbReference>
<dbReference type="GO" id="GO:0042609">
    <property type="term" value="F:CD4 receptor binding"/>
    <property type="evidence" value="ECO:0007669"/>
    <property type="project" value="UniProtKB-UniRule"/>
</dbReference>
<dbReference type="GO" id="GO:0005261">
    <property type="term" value="F:monoatomic cation channel activity"/>
    <property type="evidence" value="ECO:0007669"/>
    <property type="project" value="UniProtKB-UniRule"/>
</dbReference>
<dbReference type="GO" id="GO:0032801">
    <property type="term" value="P:receptor catabolic process"/>
    <property type="evidence" value="ECO:0007669"/>
    <property type="project" value="UniProtKB-UniRule"/>
</dbReference>
<dbReference type="GO" id="GO:0052170">
    <property type="term" value="P:symbiont-mediated suppression of host innate immune response"/>
    <property type="evidence" value="ECO:0007669"/>
    <property type="project" value="UniProtKB-KW"/>
</dbReference>
<dbReference type="GO" id="GO:0039502">
    <property type="term" value="P:symbiont-mediated suppression of host type I interferon-mediated signaling pathway"/>
    <property type="evidence" value="ECO:0007669"/>
    <property type="project" value="UniProtKB-UniRule"/>
</dbReference>
<dbReference type="GO" id="GO:0039587">
    <property type="term" value="P:symbiont-mediated-mediated suppression of host tetherin activity"/>
    <property type="evidence" value="ECO:0007669"/>
    <property type="project" value="UniProtKB-UniRule"/>
</dbReference>
<dbReference type="GO" id="GO:0019076">
    <property type="term" value="P:viral release from host cell"/>
    <property type="evidence" value="ECO:0007669"/>
    <property type="project" value="UniProtKB-UniRule"/>
</dbReference>
<dbReference type="Gene3D" id="1.10.195.10">
    <property type="entry name" value="HIV-1 VPU cytoplasmic domain"/>
    <property type="match status" value="1"/>
</dbReference>
<dbReference type="HAMAP" id="MF_04082">
    <property type="entry name" value="HIV_VPU"/>
    <property type="match status" value="1"/>
</dbReference>
<dbReference type="InterPro" id="IPR008187">
    <property type="entry name" value="Vpu"/>
</dbReference>
<dbReference type="InterPro" id="IPR009032">
    <property type="entry name" value="Vpu_cyt_dom_sf"/>
</dbReference>
<dbReference type="Pfam" id="PF00558">
    <property type="entry name" value="Vpu"/>
    <property type="match status" value="1"/>
</dbReference>
<dbReference type="SUPFAM" id="SSF57647">
    <property type="entry name" value="HIV-1 VPU cytoplasmic domain"/>
    <property type="match status" value="1"/>
</dbReference>
<keyword id="KW-0014">AIDS</keyword>
<keyword id="KW-0053">Apoptosis</keyword>
<keyword id="KW-1043">Host membrane</keyword>
<keyword id="KW-0945">Host-virus interaction</keyword>
<keyword id="KW-1090">Inhibition of host innate immune response by virus</keyword>
<keyword id="KW-1084">Inhibition of host tetherin by virus</keyword>
<keyword id="KW-0407">Ion channel</keyword>
<keyword id="KW-0406">Ion transport</keyword>
<keyword id="KW-0472">Membrane</keyword>
<keyword id="KW-0597">Phosphoprotein</keyword>
<keyword id="KW-0812">Transmembrane</keyword>
<keyword id="KW-1133">Transmembrane helix</keyword>
<keyword id="KW-0813">Transport</keyword>
<keyword id="KW-0899">Viral immunoevasion</keyword>
<gene>
    <name evidence="1" type="primary">vpu</name>
</gene>
<evidence type="ECO:0000255" key="1">
    <source>
        <dbReference type="HAMAP-Rule" id="MF_04082"/>
    </source>
</evidence>
<name>VPU_HV1BN</name>
<proteinExistence type="inferred from homology"/>
<organism>
    <name type="scientific">Human immunodeficiency virus type 1 group M subtype B (isolate BRVA)</name>
    <name type="common">HIV-1</name>
    <dbReference type="NCBI Taxonomy" id="11693"/>
    <lineage>
        <taxon>Viruses</taxon>
        <taxon>Riboviria</taxon>
        <taxon>Pararnavirae</taxon>
        <taxon>Artverviricota</taxon>
        <taxon>Revtraviricetes</taxon>
        <taxon>Ortervirales</taxon>
        <taxon>Retroviridae</taxon>
        <taxon>Orthoretrovirinae</taxon>
        <taxon>Lentivirus</taxon>
        <taxon>Human immunodeficiency virus type 1</taxon>
    </lineage>
</organism>
<sequence length="82" mass="9239">MQPLQISAIVALVVAAIIAIVVWSIALLEYRKLLRQRKIDRLIDRIRERAEDSGNESEGDQEELSALVEMGGHDAPWDIDDL</sequence>
<protein>
    <recommendedName>
        <fullName evidence="1">Protein Vpu</fullName>
    </recommendedName>
    <alternativeName>
        <fullName evidence="1">U ORF protein</fullName>
    </alternativeName>
    <alternativeName>
        <fullName evidence="1">Viral protein U</fullName>
    </alternativeName>
</protein>